<dbReference type="EC" id="2.7.1.148" evidence="1"/>
<dbReference type="EMBL" id="AE015929">
    <property type="protein sequence ID" value="AAO05930.1"/>
    <property type="molecule type" value="Genomic_DNA"/>
</dbReference>
<dbReference type="RefSeq" id="NP_765843.1">
    <property type="nucleotide sequence ID" value="NC_004461.1"/>
</dbReference>
<dbReference type="SMR" id="Q8CQU6"/>
<dbReference type="KEGG" id="sep:SE_2288"/>
<dbReference type="PATRIC" id="fig|176280.10.peg.2231"/>
<dbReference type="eggNOG" id="COG1947">
    <property type="taxonomic scope" value="Bacteria"/>
</dbReference>
<dbReference type="HOGENOM" id="CLU_053057_1_1_9"/>
<dbReference type="OrthoDB" id="9809438at2"/>
<dbReference type="Proteomes" id="UP000001411">
    <property type="component" value="Chromosome"/>
</dbReference>
<dbReference type="GO" id="GO:0050515">
    <property type="term" value="F:4-(cytidine 5'-diphospho)-2-C-methyl-D-erythritol kinase activity"/>
    <property type="evidence" value="ECO:0007669"/>
    <property type="project" value="UniProtKB-UniRule"/>
</dbReference>
<dbReference type="GO" id="GO:0005524">
    <property type="term" value="F:ATP binding"/>
    <property type="evidence" value="ECO:0007669"/>
    <property type="project" value="UniProtKB-UniRule"/>
</dbReference>
<dbReference type="GO" id="GO:0016114">
    <property type="term" value="P:terpenoid biosynthetic process"/>
    <property type="evidence" value="ECO:0007669"/>
    <property type="project" value="InterPro"/>
</dbReference>
<dbReference type="FunFam" id="3.30.230.10:FF:000029">
    <property type="entry name" value="4-diphosphocytidyl-2-C-methyl-D-erythritol kinase"/>
    <property type="match status" value="1"/>
</dbReference>
<dbReference type="FunFam" id="3.30.70.890:FF:000006">
    <property type="entry name" value="4-diphosphocytidyl-2-C-methyl-D-erythritol kinase"/>
    <property type="match status" value="1"/>
</dbReference>
<dbReference type="Gene3D" id="3.30.230.10">
    <property type="match status" value="1"/>
</dbReference>
<dbReference type="Gene3D" id="3.30.70.890">
    <property type="entry name" value="GHMP kinase, C-terminal domain"/>
    <property type="match status" value="1"/>
</dbReference>
<dbReference type="HAMAP" id="MF_00061">
    <property type="entry name" value="IspE"/>
    <property type="match status" value="1"/>
</dbReference>
<dbReference type="InterPro" id="IPR013750">
    <property type="entry name" value="GHMP_kinase_C_dom"/>
</dbReference>
<dbReference type="InterPro" id="IPR036554">
    <property type="entry name" value="GHMP_kinase_C_sf"/>
</dbReference>
<dbReference type="InterPro" id="IPR006204">
    <property type="entry name" value="GHMP_kinase_N_dom"/>
</dbReference>
<dbReference type="InterPro" id="IPR004424">
    <property type="entry name" value="IspE"/>
</dbReference>
<dbReference type="InterPro" id="IPR020568">
    <property type="entry name" value="Ribosomal_Su5_D2-typ_SF"/>
</dbReference>
<dbReference type="InterPro" id="IPR014721">
    <property type="entry name" value="Ribsml_uS5_D2-typ_fold_subgr"/>
</dbReference>
<dbReference type="NCBIfam" id="TIGR00154">
    <property type="entry name" value="ispE"/>
    <property type="match status" value="1"/>
</dbReference>
<dbReference type="PANTHER" id="PTHR43527">
    <property type="entry name" value="4-DIPHOSPHOCYTIDYL-2-C-METHYL-D-ERYTHRITOL KINASE, CHLOROPLASTIC"/>
    <property type="match status" value="1"/>
</dbReference>
<dbReference type="PANTHER" id="PTHR43527:SF2">
    <property type="entry name" value="4-DIPHOSPHOCYTIDYL-2-C-METHYL-D-ERYTHRITOL KINASE, CHLOROPLASTIC"/>
    <property type="match status" value="1"/>
</dbReference>
<dbReference type="Pfam" id="PF08544">
    <property type="entry name" value="GHMP_kinases_C"/>
    <property type="match status" value="1"/>
</dbReference>
<dbReference type="Pfam" id="PF00288">
    <property type="entry name" value="GHMP_kinases_N"/>
    <property type="match status" value="1"/>
</dbReference>
<dbReference type="PIRSF" id="PIRSF010376">
    <property type="entry name" value="IspE"/>
    <property type="match status" value="1"/>
</dbReference>
<dbReference type="SUPFAM" id="SSF55060">
    <property type="entry name" value="GHMP Kinase, C-terminal domain"/>
    <property type="match status" value="1"/>
</dbReference>
<dbReference type="SUPFAM" id="SSF54211">
    <property type="entry name" value="Ribosomal protein S5 domain 2-like"/>
    <property type="match status" value="1"/>
</dbReference>
<evidence type="ECO:0000255" key="1">
    <source>
        <dbReference type="HAMAP-Rule" id="MF_00061"/>
    </source>
</evidence>
<reference key="1">
    <citation type="journal article" date="2003" name="Mol. Microbiol.">
        <title>Genome-based analysis of virulence genes in a non-biofilm-forming Staphylococcus epidermidis strain (ATCC 12228).</title>
        <authorList>
            <person name="Zhang Y.-Q."/>
            <person name="Ren S.-X."/>
            <person name="Li H.-L."/>
            <person name="Wang Y.-X."/>
            <person name="Fu G."/>
            <person name="Yang J."/>
            <person name="Qin Z.-Q."/>
            <person name="Miao Y.-G."/>
            <person name="Wang W.-Y."/>
            <person name="Chen R.-S."/>
            <person name="Shen Y."/>
            <person name="Chen Z."/>
            <person name="Yuan Z.-H."/>
            <person name="Zhao G.-P."/>
            <person name="Qu D."/>
            <person name="Danchin A."/>
            <person name="Wen Y.-M."/>
        </authorList>
    </citation>
    <scope>NUCLEOTIDE SEQUENCE [LARGE SCALE GENOMIC DNA]</scope>
    <source>
        <strain>ATCC 12228 / FDA PCI 1200</strain>
    </source>
</reference>
<sequence length="282" mass="31030">MIYETAPAKINFTLDTLFKRDDGYHEIEMVMTTVDLNDRLSFEKRTDNKIVVDIEHNYVPNDNKNLAYKAADLMFERFNINEGVTISIDKDIPVSAGLAGGSADAAATMRGLNRLFGLGQSLDALAALGIQIGTDIPFCIYNQTAVCTGRGEQVTFLKRPPSAWVVLAKPNIGISSPDVFKALDLTEEHIVHNEKCKQALENNDYHLLCNSLSNRLEPVSMAMHPDIKKIKDNMLQCGADGALMSGSGPTVYGLAQKERQAKNIYNAVNGCCNEVYLVRLLG</sequence>
<keyword id="KW-0067">ATP-binding</keyword>
<keyword id="KW-0418">Kinase</keyword>
<keyword id="KW-0547">Nucleotide-binding</keyword>
<keyword id="KW-0808">Transferase</keyword>
<organism>
    <name type="scientific">Staphylococcus epidermidis (strain ATCC 12228 / FDA PCI 1200)</name>
    <dbReference type="NCBI Taxonomy" id="176280"/>
    <lineage>
        <taxon>Bacteria</taxon>
        <taxon>Bacillati</taxon>
        <taxon>Bacillota</taxon>
        <taxon>Bacilli</taxon>
        <taxon>Bacillales</taxon>
        <taxon>Staphylococcaceae</taxon>
        <taxon>Staphylococcus</taxon>
    </lineage>
</organism>
<name>ISPE_STAES</name>
<proteinExistence type="inferred from homology"/>
<protein>
    <recommendedName>
        <fullName evidence="1">Putative 4-diphosphocytidyl-2-C-methyl-D-erythritol kinase</fullName>
        <shortName evidence="1">CMK</shortName>
        <ecNumber evidence="1">2.7.1.148</ecNumber>
    </recommendedName>
    <alternativeName>
        <fullName evidence="1">4-(cytidine-5'-diphospho)-2-C-methyl-D-erythritol kinase</fullName>
    </alternativeName>
</protein>
<comment type="function">
    <text evidence="1">Catalyzes the phosphorylation of the position 2 hydroxy group of 4-diphosphocytidyl-2C-methyl-D-erythritol.</text>
</comment>
<comment type="catalytic activity">
    <reaction evidence="1">
        <text>4-CDP-2-C-methyl-D-erythritol + ATP = 4-CDP-2-C-methyl-D-erythritol 2-phosphate + ADP + H(+)</text>
        <dbReference type="Rhea" id="RHEA:18437"/>
        <dbReference type="ChEBI" id="CHEBI:15378"/>
        <dbReference type="ChEBI" id="CHEBI:30616"/>
        <dbReference type="ChEBI" id="CHEBI:57823"/>
        <dbReference type="ChEBI" id="CHEBI:57919"/>
        <dbReference type="ChEBI" id="CHEBI:456216"/>
        <dbReference type="EC" id="2.7.1.148"/>
    </reaction>
</comment>
<comment type="similarity">
    <text evidence="1">Belongs to the GHMP kinase family. IspE subfamily.</text>
</comment>
<gene>
    <name type="ordered locus">SE_2288</name>
</gene>
<feature type="chain" id="PRO_0000189267" description="Putative 4-diphosphocytidyl-2-C-methyl-D-erythritol kinase">
    <location>
        <begin position="1"/>
        <end position="282"/>
    </location>
</feature>
<feature type="active site" evidence="1">
    <location>
        <position position="9"/>
    </location>
</feature>
<feature type="active site" evidence="1">
    <location>
        <position position="135"/>
    </location>
</feature>
<feature type="binding site" evidence="1">
    <location>
        <begin position="93"/>
        <end position="103"/>
    </location>
    <ligand>
        <name>ATP</name>
        <dbReference type="ChEBI" id="CHEBI:30616"/>
    </ligand>
</feature>
<accession>Q8CQU6</accession>